<reference key="1">
    <citation type="submission" date="2005-11" db="EMBL/GenBank/DDBJ databases">
        <title>The complete genome sequence of Lawsonia intracellularis: the causative agent of proliferative enteropathy.</title>
        <authorList>
            <person name="Kaur K."/>
            <person name="Zhang Q."/>
            <person name="Beckler D."/>
            <person name="Munir S."/>
            <person name="Li L."/>
            <person name="Kinsley K."/>
            <person name="Herron L."/>
            <person name="Peterson A."/>
            <person name="May B."/>
            <person name="Singh S."/>
            <person name="Gebhart C."/>
            <person name="Kapur V."/>
        </authorList>
    </citation>
    <scope>NUCLEOTIDE SEQUENCE [LARGE SCALE GENOMIC DNA]</scope>
    <source>
        <strain>PHE/MN1-00</strain>
    </source>
</reference>
<organism>
    <name type="scientific">Lawsonia intracellularis (strain PHE/MN1-00)</name>
    <dbReference type="NCBI Taxonomy" id="363253"/>
    <lineage>
        <taxon>Bacteria</taxon>
        <taxon>Pseudomonadati</taxon>
        <taxon>Thermodesulfobacteriota</taxon>
        <taxon>Desulfovibrionia</taxon>
        <taxon>Desulfovibrionales</taxon>
        <taxon>Desulfovibrionaceae</taxon>
        <taxon>Lawsonia</taxon>
    </lineage>
</organism>
<sequence>MLAPKKVKFRKWQKGRLRGPALRGISIAYGDIALKSTEHGKLTSQQIEAARIAMMRHIKRGGKVWIRVFPDHPITAKPLETRQGSGKGSPVGWCAPVKPGRILYEIKGVNIDLAREALIRAAHKLPVKTVIVLKERL</sequence>
<comment type="function">
    <text evidence="1">Binds 23S rRNA and is also seen to make contacts with the A and possibly P site tRNAs.</text>
</comment>
<comment type="subunit">
    <text evidence="1">Part of the 50S ribosomal subunit.</text>
</comment>
<comment type="similarity">
    <text evidence="1">Belongs to the universal ribosomal protein uL16 family.</text>
</comment>
<name>RL16_LAWIP</name>
<gene>
    <name evidence="1" type="primary">rplP</name>
    <name type="ordered locus">LI0967</name>
</gene>
<protein>
    <recommendedName>
        <fullName evidence="1">Large ribosomal subunit protein uL16</fullName>
    </recommendedName>
    <alternativeName>
        <fullName evidence="2">50S ribosomal protein L16</fullName>
    </alternativeName>
</protein>
<accession>Q1MPQ6</accession>
<proteinExistence type="inferred from homology"/>
<dbReference type="EMBL" id="AM180252">
    <property type="protein sequence ID" value="CAJ55021.1"/>
    <property type="molecule type" value="Genomic_DNA"/>
</dbReference>
<dbReference type="RefSeq" id="WP_011527050.1">
    <property type="nucleotide sequence ID" value="NC_008011.1"/>
</dbReference>
<dbReference type="SMR" id="Q1MPQ6"/>
<dbReference type="STRING" id="363253.LI0967"/>
<dbReference type="KEGG" id="lip:LI0967"/>
<dbReference type="eggNOG" id="COG0197">
    <property type="taxonomic scope" value="Bacteria"/>
</dbReference>
<dbReference type="HOGENOM" id="CLU_078858_2_1_7"/>
<dbReference type="OrthoDB" id="9802589at2"/>
<dbReference type="Proteomes" id="UP000002430">
    <property type="component" value="Chromosome"/>
</dbReference>
<dbReference type="GO" id="GO:0022625">
    <property type="term" value="C:cytosolic large ribosomal subunit"/>
    <property type="evidence" value="ECO:0007669"/>
    <property type="project" value="TreeGrafter"/>
</dbReference>
<dbReference type="GO" id="GO:0019843">
    <property type="term" value="F:rRNA binding"/>
    <property type="evidence" value="ECO:0007669"/>
    <property type="project" value="UniProtKB-UniRule"/>
</dbReference>
<dbReference type="GO" id="GO:0003735">
    <property type="term" value="F:structural constituent of ribosome"/>
    <property type="evidence" value="ECO:0007669"/>
    <property type="project" value="InterPro"/>
</dbReference>
<dbReference type="GO" id="GO:0000049">
    <property type="term" value="F:tRNA binding"/>
    <property type="evidence" value="ECO:0007669"/>
    <property type="project" value="UniProtKB-KW"/>
</dbReference>
<dbReference type="GO" id="GO:0006412">
    <property type="term" value="P:translation"/>
    <property type="evidence" value="ECO:0007669"/>
    <property type="project" value="UniProtKB-UniRule"/>
</dbReference>
<dbReference type="CDD" id="cd01433">
    <property type="entry name" value="Ribosomal_L16_L10e"/>
    <property type="match status" value="1"/>
</dbReference>
<dbReference type="FunFam" id="3.90.1170.10:FF:000001">
    <property type="entry name" value="50S ribosomal protein L16"/>
    <property type="match status" value="1"/>
</dbReference>
<dbReference type="Gene3D" id="3.90.1170.10">
    <property type="entry name" value="Ribosomal protein L10e/L16"/>
    <property type="match status" value="1"/>
</dbReference>
<dbReference type="HAMAP" id="MF_01342">
    <property type="entry name" value="Ribosomal_uL16"/>
    <property type="match status" value="1"/>
</dbReference>
<dbReference type="InterPro" id="IPR047873">
    <property type="entry name" value="Ribosomal_uL16"/>
</dbReference>
<dbReference type="InterPro" id="IPR000114">
    <property type="entry name" value="Ribosomal_uL16_bact-type"/>
</dbReference>
<dbReference type="InterPro" id="IPR020798">
    <property type="entry name" value="Ribosomal_uL16_CS"/>
</dbReference>
<dbReference type="InterPro" id="IPR016180">
    <property type="entry name" value="Ribosomal_uL16_dom"/>
</dbReference>
<dbReference type="InterPro" id="IPR036920">
    <property type="entry name" value="Ribosomal_uL16_sf"/>
</dbReference>
<dbReference type="NCBIfam" id="TIGR01164">
    <property type="entry name" value="rplP_bact"/>
    <property type="match status" value="1"/>
</dbReference>
<dbReference type="PANTHER" id="PTHR12220">
    <property type="entry name" value="50S/60S RIBOSOMAL PROTEIN L16"/>
    <property type="match status" value="1"/>
</dbReference>
<dbReference type="PANTHER" id="PTHR12220:SF13">
    <property type="entry name" value="LARGE RIBOSOMAL SUBUNIT PROTEIN UL16M"/>
    <property type="match status" value="1"/>
</dbReference>
<dbReference type="Pfam" id="PF00252">
    <property type="entry name" value="Ribosomal_L16"/>
    <property type="match status" value="1"/>
</dbReference>
<dbReference type="PRINTS" id="PR00060">
    <property type="entry name" value="RIBOSOMALL16"/>
</dbReference>
<dbReference type="SUPFAM" id="SSF54686">
    <property type="entry name" value="Ribosomal protein L16p/L10e"/>
    <property type="match status" value="1"/>
</dbReference>
<dbReference type="PROSITE" id="PS00586">
    <property type="entry name" value="RIBOSOMAL_L16_1"/>
    <property type="match status" value="1"/>
</dbReference>
<evidence type="ECO:0000255" key="1">
    <source>
        <dbReference type="HAMAP-Rule" id="MF_01342"/>
    </source>
</evidence>
<evidence type="ECO:0000305" key="2"/>
<feature type="chain" id="PRO_0000251643" description="Large ribosomal subunit protein uL16">
    <location>
        <begin position="1"/>
        <end position="137"/>
    </location>
</feature>
<keyword id="KW-1185">Reference proteome</keyword>
<keyword id="KW-0687">Ribonucleoprotein</keyword>
<keyword id="KW-0689">Ribosomal protein</keyword>
<keyword id="KW-0694">RNA-binding</keyword>
<keyword id="KW-0699">rRNA-binding</keyword>
<keyword id="KW-0820">tRNA-binding</keyword>